<name>RSMF_SHEB9</name>
<feature type="chain" id="PRO_0000382586" description="Ribosomal RNA small subunit methyltransferase F">
    <location>
        <begin position="1"/>
        <end position="486"/>
    </location>
</feature>
<feature type="active site" description="Nucleophile" evidence="1">
    <location>
        <position position="246"/>
    </location>
</feature>
<feature type="binding site" evidence="1">
    <location>
        <begin position="124"/>
        <end position="130"/>
    </location>
    <ligand>
        <name>S-adenosyl-L-methionine</name>
        <dbReference type="ChEBI" id="CHEBI:59789"/>
    </ligand>
</feature>
<feature type="binding site" evidence="1">
    <location>
        <position position="148"/>
    </location>
    <ligand>
        <name>S-adenosyl-L-methionine</name>
        <dbReference type="ChEBI" id="CHEBI:59789"/>
    </ligand>
</feature>
<feature type="binding site" evidence="1">
    <location>
        <position position="175"/>
    </location>
    <ligand>
        <name>S-adenosyl-L-methionine</name>
        <dbReference type="ChEBI" id="CHEBI:59789"/>
    </ligand>
</feature>
<feature type="binding site" evidence="1">
    <location>
        <position position="193"/>
    </location>
    <ligand>
        <name>S-adenosyl-L-methionine</name>
        <dbReference type="ChEBI" id="CHEBI:59789"/>
    </ligand>
</feature>
<sequence>MVQLNQNFIDTITQELPAHLSMDEFIAACDRPLRRSIRVNTLKISSDDFKTLMQPKGWTFDPIPWCEDGFWISYDEEEQLGNALEHIQGLFYIQEASSMLPPTALFTPSAFTTSTKWQCVLDLASAPGSKTTQMAALMQNQGLLVANEYSASRVKVLHANVLRMGASHCALTHFDGRVFGEYLYESFDAVLIDAPCGGEGTVRKDADALKHWSLDDVLAISETQKALIESAFLALKPGGSLVYSTCTLNRLENQGVCEYLKQVYGDAVQFESLSDLFDGAERATTAEGFLHVWPQIYDSEGFFVAKLTKTASVPRLLPEPKLQKNFPFTPASAKQAQGIKDYFQQDLGISLPDELIMVRDDEFWLFPHEFNAFIGRMRFQRIGIKLADSSKHGFKVRHEAIIALAGKQLSPTAKTVDVSDVEAKEYLMGRDIPLATAGKAQGEVIVCYGGAPLGMAKHLGNKLKNNLPRDLVKDKVLLLPEQTKSL</sequence>
<comment type="function">
    <text evidence="1">Specifically methylates the cytosine at position 1407 (m5C1407) of 16S rRNA.</text>
</comment>
<comment type="catalytic activity">
    <reaction evidence="1">
        <text>cytidine(1407) in 16S rRNA + S-adenosyl-L-methionine = 5-methylcytidine(1407) in 16S rRNA + S-adenosyl-L-homocysteine + H(+)</text>
        <dbReference type="Rhea" id="RHEA:42756"/>
        <dbReference type="Rhea" id="RHEA-COMP:10223"/>
        <dbReference type="Rhea" id="RHEA-COMP:10224"/>
        <dbReference type="ChEBI" id="CHEBI:15378"/>
        <dbReference type="ChEBI" id="CHEBI:57856"/>
        <dbReference type="ChEBI" id="CHEBI:59789"/>
        <dbReference type="ChEBI" id="CHEBI:74483"/>
        <dbReference type="ChEBI" id="CHEBI:82748"/>
        <dbReference type="EC" id="2.1.1.178"/>
    </reaction>
</comment>
<comment type="subcellular location">
    <subcellularLocation>
        <location evidence="1">Cytoplasm</location>
    </subcellularLocation>
</comment>
<comment type="similarity">
    <text evidence="1">Belongs to the class I-like SAM-binding methyltransferase superfamily. RsmB/NOP family.</text>
</comment>
<comment type="sequence caution" evidence="2">
    <conflict type="erroneous initiation">
        <sequence resource="EMBL-CDS" id="ABX49736"/>
    </conflict>
</comment>
<gene>
    <name evidence="1" type="primary">rsmF</name>
    <name type="ordered locus">Sbal195_2568</name>
</gene>
<keyword id="KW-0963">Cytoplasm</keyword>
<keyword id="KW-0489">Methyltransferase</keyword>
<keyword id="KW-0694">RNA-binding</keyword>
<keyword id="KW-0698">rRNA processing</keyword>
<keyword id="KW-0949">S-adenosyl-L-methionine</keyword>
<keyword id="KW-0808">Transferase</keyword>
<proteinExistence type="inferred from homology"/>
<evidence type="ECO:0000255" key="1">
    <source>
        <dbReference type="HAMAP-Rule" id="MF_01579"/>
    </source>
</evidence>
<evidence type="ECO:0000305" key="2"/>
<dbReference type="EC" id="2.1.1.178" evidence="1"/>
<dbReference type="EMBL" id="CP000891">
    <property type="protein sequence ID" value="ABX49736.1"/>
    <property type="status" value="ALT_INIT"/>
    <property type="molecule type" value="Genomic_DNA"/>
</dbReference>
<dbReference type="SMR" id="A9L4E6"/>
<dbReference type="KEGG" id="sbn:Sbal195_2568"/>
<dbReference type="HOGENOM" id="CLU_005316_6_2_6"/>
<dbReference type="Proteomes" id="UP000000770">
    <property type="component" value="Chromosome"/>
</dbReference>
<dbReference type="GO" id="GO:0005737">
    <property type="term" value="C:cytoplasm"/>
    <property type="evidence" value="ECO:0007669"/>
    <property type="project" value="UniProtKB-SubCell"/>
</dbReference>
<dbReference type="GO" id="GO:0003723">
    <property type="term" value="F:RNA binding"/>
    <property type="evidence" value="ECO:0007669"/>
    <property type="project" value="UniProtKB-KW"/>
</dbReference>
<dbReference type="GO" id="GO:0009383">
    <property type="term" value="F:rRNA (cytosine-C5-)-methyltransferase activity"/>
    <property type="evidence" value="ECO:0007669"/>
    <property type="project" value="TreeGrafter"/>
</dbReference>
<dbReference type="GO" id="GO:0070475">
    <property type="term" value="P:rRNA base methylation"/>
    <property type="evidence" value="ECO:0007669"/>
    <property type="project" value="TreeGrafter"/>
</dbReference>
<dbReference type="CDD" id="cd02440">
    <property type="entry name" value="AdoMet_MTases"/>
    <property type="match status" value="1"/>
</dbReference>
<dbReference type="FunFam" id="3.40.50.150:FF:000079">
    <property type="entry name" value="Ribosomal RNA small subunit methyltransferase F"/>
    <property type="match status" value="1"/>
</dbReference>
<dbReference type="Gene3D" id="3.10.450.720">
    <property type="match status" value="1"/>
</dbReference>
<dbReference type="Gene3D" id="3.40.50.150">
    <property type="entry name" value="Vaccinia Virus protein VP39"/>
    <property type="match status" value="1"/>
</dbReference>
<dbReference type="HAMAP" id="MF_01579">
    <property type="entry name" value="16SrRNA_methyltr_F"/>
    <property type="match status" value="1"/>
</dbReference>
<dbReference type="InterPro" id="IPR031341">
    <property type="entry name" value="Methyltr_RsmF_N"/>
</dbReference>
<dbReference type="InterPro" id="IPR049560">
    <property type="entry name" value="MeTrfase_RsmB-F_NOP2_cat"/>
</dbReference>
<dbReference type="InterPro" id="IPR001678">
    <property type="entry name" value="MeTrfase_RsmB-F_NOP2_dom"/>
</dbReference>
<dbReference type="InterPro" id="IPR027391">
    <property type="entry name" value="Nol1_Nop2_Fmu_2"/>
</dbReference>
<dbReference type="InterPro" id="IPR011023">
    <property type="entry name" value="Nop2p"/>
</dbReference>
<dbReference type="InterPro" id="IPR023267">
    <property type="entry name" value="RCMT"/>
</dbReference>
<dbReference type="InterPro" id="IPR023545">
    <property type="entry name" value="rRNA_ssu_MeTfrase_F"/>
</dbReference>
<dbReference type="InterPro" id="IPR029063">
    <property type="entry name" value="SAM-dependent_MTases_sf"/>
</dbReference>
<dbReference type="InterPro" id="IPR048457">
    <property type="entry name" value="YebU_pre-PUA_dom"/>
</dbReference>
<dbReference type="NCBIfam" id="TIGR00446">
    <property type="entry name" value="nop2p"/>
    <property type="match status" value="1"/>
</dbReference>
<dbReference type="NCBIfam" id="NF008898">
    <property type="entry name" value="PRK11933.1"/>
    <property type="match status" value="1"/>
</dbReference>
<dbReference type="PANTHER" id="PTHR22807:SF30">
    <property type="entry name" value="28S RRNA (CYTOSINE(4447)-C(5))-METHYLTRANSFERASE-RELATED"/>
    <property type="match status" value="1"/>
</dbReference>
<dbReference type="PANTHER" id="PTHR22807">
    <property type="entry name" value="NOP2 YEAST -RELATED NOL1/NOP2/FMU SUN DOMAIN-CONTAINING"/>
    <property type="match status" value="1"/>
</dbReference>
<dbReference type="Pfam" id="PF01189">
    <property type="entry name" value="Methyltr_RsmB-F"/>
    <property type="match status" value="1"/>
</dbReference>
<dbReference type="Pfam" id="PF17125">
    <property type="entry name" value="Methyltr_RsmF_N"/>
    <property type="match status" value="1"/>
</dbReference>
<dbReference type="Pfam" id="PF13636">
    <property type="entry name" value="Methyltranf_PUA"/>
    <property type="match status" value="1"/>
</dbReference>
<dbReference type="Pfam" id="PF21150">
    <property type="entry name" value="YebU_pre-PUA_dom"/>
    <property type="match status" value="1"/>
</dbReference>
<dbReference type="PRINTS" id="PR02008">
    <property type="entry name" value="RCMTFAMILY"/>
</dbReference>
<dbReference type="SUPFAM" id="SSF53335">
    <property type="entry name" value="S-adenosyl-L-methionine-dependent methyltransferases"/>
    <property type="match status" value="1"/>
</dbReference>
<dbReference type="PROSITE" id="PS51686">
    <property type="entry name" value="SAM_MT_RSMB_NOP"/>
    <property type="match status" value="1"/>
</dbReference>
<organism>
    <name type="scientific">Shewanella baltica (strain OS195)</name>
    <dbReference type="NCBI Taxonomy" id="399599"/>
    <lineage>
        <taxon>Bacteria</taxon>
        <taxon>Pseudomonadati</taxon>
        <taxon>Pseudomonadota</taxon>
        <taxon>Gammaproteobacteria</taxon>
        <taxon>Alteromonadales</taxon>
        <taxon>Shewanellaceae</taxon>
        <taxon>Shewanella</taxon>
    </lineage>
</organism>
<reference key="1">
    <citation type="submission" date="2007-11" db="EMBL/GenBank/DDBJ databases">
        <title>Complete sequence of chromosome of Shewanella baltica OS195.</title>
        <authorList>
            <consortium name="US DOE Joint Genome Institute"/>
            <person name="Copeland A."/>
            <person name="Lucas S."/>
            <person name="Lapidus A."/>
            <person name="Barry K."/>
            <person name="Glavina del Rio T."/>
            <person name="Dalin E."/>
            <person name="Tice H."/>
            <person name="Pitluck S."/>
            <person name="Chain P."/>
            <person name="Malfatti S."/>
            <person name="Shin M."/>
            <person name="Vergez L."/>
            <person name="Schmutz J."/>
            <person name="Larimer F."/>
            <person name="Land M."/>
            <person name="Hauser L."/>
            <person name="Kyrpides N."/>
            <person name="Kim E."/>
            <person name="Brettar I."/>
            <person name="Rodrigues J."/>
            <person name="Konstantinidis K."/>
            <person name="Klappenbach J."/>
            <person name="Hofle M."/>
            <person name="Tiedje J."/>
            <person name="Richardson P."/>
        </authorList>
    </citation>
    <scope>NUCLEOTIDE SEQUENCE [LARGE SCALE GENOMIC DNA]</scope>
    <source>
        <strain>OS195</strain>
    </source>
</reference>
<accession>A9L4E6</accession>
<protein>
    <recommendedName>
        <fullName evidence="1">Ribosomal RNA small subunit methyltransferase F</fullName>
        <ecNumber evidence="1">2.1.1.178</ecNumber>
    </recommendedName>
    <alternativeName>
        <fullName evidence="1">16S rRNA m5C1407 methyltransferase</fullName>
    </alternativeName>
    <alternativeName>
        <fullName evidence="1">rRNA (cytosine-C(5)-)-methyltransferase RsmF</fullName>
    </alternativeName>
</protein>